<comment type="function">
    <text evidence="1">Catalyzes the synthesis of beta-nicotinate D-ribonucleotide from nicotinate and 5-phospho-D-ribose 1-phosphate at the expense of ATP.</text>
</comment>
<comment type="catalytic activity">
    <reaction evidence="1">
        <text>nicotinate + 5-phospho-alpha-D-ribose 1-diphosphate + ATP + H2O = nicotinate beta-D-ribonucleotide + ADP + phosphate + diphosphate</text>
        <dbReference type="Rhea" id="RHEA:36163"/>
        <dbReference type="ChEBI" id="CHEBI:15377"/>
        <dbReference type="ChEBI" id="CHEBI:30616"/>
        <dbReference type="ChEBI" id="CHEBI:32544"/>
        <dbReference type="ChEBI" id="CHEBI:33019"/>
        <dbReference type="ChEBI" id="CHEBI:43474"/>
        <dbReference type="ChEBI" id="CHEBI:57502"/>
        <dbReference type="ChEBI" id="CHEBI:58017"/>
        <dbReference type="ChEBI" id="CHEBI:456216"/>
        <dbReference type="EC" id="6.3.4.21"/>
    </reaction>
</comment>
<comment type="pathway">
    <text evidence="1">Cofactor biosynthesis; NAD(+) biosynthesis; nicotinate D-ribonucleotide from nicotinate: step 1/1.</text>
</comment>
<comment type="PTM">
    <text evidence="1">Transiently phosphorylated on a His residue during the reaction cycle. Phosphorylation strongly increases the affinity for substrates and increases the rate of nicotinate D-ribonucleotide production. Dephosphorylation regenerates the low-affinity form of the enzyme, leading to product release.</text>
</comment>
<comment type="similarity">
    <text evidence="1">Belongs to the NAPRTase family.</text>
</comment>
<organism>
    <name type="scientific">Bradyrhizobium sp. (strain BTAi1 / ATCC BAA-1182)</name>
    <dbReference type="NCBI Taxonomy" id="288000"/>
    <lineage>
        <taxon>Bacteria</taxon>
        <taxon>Pseudomonadati</taxon>
        <taxon>Pseudomonadota</taxon>
        <taxon>Alphaproteobacteria</taxon>
        <taxon>Hyphomicrobiales</taxon>
        <taxon>Nitrobacteraceae</taxon>
        <taxon>Bradyrhizobium</taxon>
    </lineage>
</organism>
<keyword id="KW-0436">Ligase</keyword>
<keyword id="KW-0597">Phosphoprotein</keyword>
<keyword id="KW-0662">Pyridine nucleotide biosynthesis</keyword>
<keyword id="KW-1185">Reference proteome</keyword>
<reference key="1">
    <citation type="journal article" date="2007" name="Science">
        <title>Legumes symbioses: absence of nod genes in photosynthetic bradyrhizobia.</title>
        <authorList>
            <person name="Giraud E."/>
            <person name="Moulin L."/>
            <person name="Vallenet D."/>
            <person name="Barbe V."/>
            <person name="Cytryn E."/>
            <person name="Avarre J.-C."/>
            <person name="Jaubert M."/>
            <person name="Simon D."/>
            <person name="Cartieaux F."/>
            <person name="Prin Y."/>
            <person name="Bena G."/>
            <person name="Hannibal L."/>
            <person name="Fardoux J."/>
            <person name="Kojadinovic M."/>
            <person name="Vuillet L."/>
            <person name="Lajus A."/>
            <person name="Cruveiller S."/>
            <person name="Rouy Z."/>
            <person name="Mangenot S."/>
            <person name="Segurens B."/>
            <person name="Dossat C."/>
            <person name="Franck W.L."/>
            <person name="Chang W.-S."/>
            <person name="Saunders E."/>
            <person name="Bruce D."/>
            <person name="Richardson P."/>
            <person name="Normand P."/>
            <person name="Dreyfus B."/>
            <person name="Pignol D."/>
            <person name="Stacey G."/>
            <person name="Emerich D."/>
            <person name="Vermeglio A."/>
            <person name="Medigue C."/>
            <person name="Sadowsky M."/>
        </authorList>
    </citation>
    <scope>NUCLEOTIDE SEQUENCE [LARGE SCALE GENOMIC DNA]</scope>
    <source>
        <strain>BTAi1 / ATCC BAA-1182</strain>
    </source>
</reference>
<feature type="chain" id="PRO_1000146833" description="Nicotinate phosphoribosyltransferase">
    <location>
        <begin position="1"/>
        <end position="434"/>
    </location>
</feature>
<feature type="modified residue" description="Phosphohistidine; by autocatalysis" evidence="1">
    <location>
        <position position="242"/>
    </location>
</feature>
<evidence type="ECO:0000255" key="1">
    <source>
        <dbReference type="HAMAP-Rule" id="MF_00570"/>
    </source>
</evidence>
<proteinExistence type="inferred from homology"/>
<sequence length="434" mass="49497">MTVTDIASRTYNHGWRLDPIVRSLLDTDFYKLLMLQMIREFYPDQKVTFSVINRTKRVRLGDVIDEGELRAQLDHARTIRFTKKELIWLAGNTFYGKTHMFSPDFLAWLAHFRLPDYELHKADGQYELHFHGPWTHTTMWEIPALAIVNELRSRQAMKGQGRFALDVLFARAKAKLWAKVERLRRLEGLRLSDFGTRRRHGFLWQRWCVEAVKEGLGPSFTGTSNVLLAMDNDLEAIGTNAHELPMVAAALARDDDELRFAPYRILDQWRQTYAGNLLIALPDAFGTKAFLRDAPDWVADWTGFRPDSAPPIEAGEEIIAWWKSKGRDPKQKLLVFSDAMDVESIEQIHHRFSDRVRLSFGWGTNLTNDFVGCAPDGSVDLDPISLVCKVTSVDGQPAVKLSDNPEKATGDPAEIARYLRVFGDAGRVRTPVVV</sequence>
<dbReference type="EC" id="6.3.4.21" evidence="1"/>
<dbReference type="EMBL" id="CP000494">
    <property type="protein sequence ID" value="ABQ32601.1"/>
    <property type="molecule type" value="Genomic_DNA"/>
</dbReference>
<dbReference type="RefSeq" id="WP_012040655.1">
    <property type="nucleotide sequence ID" value="NC_009485.1"/>
</dbReference>
<dbReference type="SMR" id="A5E8V7"/>
<dbReference type="STRING" id="288000.BBta_0308"/>
<dbReference type="KEGG" id="bbt:BBta_0308"/>
<dbReference type="eggNOG" id="COG1488">
    <property type="taxonomic scope" value="Bacteria"/>
</dbReference>
<dbReference type="HOGENOM" id="CLU_030991_1_0_5"/>
<dbReference type="OrthoDB" id="9771406at2"/>
<dbReference type="UniPathway" id="UPA00253">
    <property type="reaction ID" value="UER00457"/>
</dbReference>
<dbReference type="Proteomes" id="UP000000246">
    <property type="component" value="Chromosome"/>
</dbReference>
<dbReference type="GO" id="GO:0005829">
    <property type="term" value="C:cytosol"/>
    <property type="evidence" value="ECO:0007669"/>
    <property type="project" value="TreeGrafter"/>
</dbReference>
<dbReference type="GO" id="GO:0004516">
    <property type="term" value="F:nicotinate phosphoribosyltransferase activity"/>
    <property type="evidence" value="ECO:0007669"/>
    <property type="project" value="UniProtKB-UniRule"/>
</dbReference>
<dbReference type="GO" id="GO:0034355">
    <property type="term" value="P:NAD biosynthetic process via the salvage pathway"/>
    <property type="evidence" value="ECO:0007669"/>
    <property type="project" value="TreeGrafter"/>
</dbReference>
<dbReference type="Gene3D" id="3.20.140.10">
    <property type="entry name" value="nicotinate phosphoribosyltransferase"/>
    <property type="match status" value="1"/>
</dbReference>
<dbReference type="HAMAP" id="MF_00570">
    <property type="entry name" value="NAPRTase"/>
    <property type="match status" value="1"/>
</dbReference>
<dbReference type="InterPro" id="IPR041525">
    <property type="entry name" value="N/Namide_PRibTrfase"/>
</dbReference>
<dbReference type="InterPro" id="IPR040727">
    <property type="entry name" value="NAPRTase_N"/>
</dbReference>
<dbReference type="InterPro" id="IPR006406">
    <property type="entry name" value="Nic_PRibTrfase"/>
</dbReference>
<dbReference type="InterPro" id="IPR007229">
    <property type="entry name" value="Nic_PRibTrfase-Fam"/>
</dbReference>
<dbReference type="InterPro" id="IPR036068">
    <property type="entry name" value="Nicotinate_pribotase-like_C"/>
</dbReference>
<dbReference type="NCBIfam" id="TIGR01514">
    <property type="entry name" value="NAPRTase"/>
    <property type="match status" value="1"/>
</dbReference>
<dbReference type="NCBIfam" id="NF003704">
    <property type="entry name" value="PRK05321.1"/>
    <property type="match status" value="1"/>
</dbReference>
<dbReference type="PANTHER" id="PTHR11098">
    <property type="entry name" value="NICOTINATE PHOSPHORIBOSYLTRANSFERASE"/>
    <property type="match status" value="1"/>
</dbReference>
<dbReference type="PANTHER" id="PTHR11098:SF1">
    <property type="entry name" value="NICOTINATE PHOSPHORIBOSYLTRANSFERASE"/>
    <property type="match status" value="1"/>
</dbReference>
<dbReference type="Pfam" id="PF04095">
    <property type="entry name" value="NAPRTase"/>
    <property type="match status" value="1"/>
</dbReference>
<dbReference type="Pfam" id="PF17767">
    <property type="entry name" value="NAPRTase_N"/>
    <property type="match status" value="1"/>
</dbReference>
<dbReference type="PIRSF" id="PIRSF000484">
    <property type="entry name" value="NAPRT"/>
    <property type="match status" value="1"/>
</dbReference>
<dbReference type="SUPFAM" id="SSF51690">
    <property type="entry name" value="Nicotinate/Quinolinate PRTase C-terminal domain-like"/>
    <property type="match status" value="1"/>
</dbReference>
<dbReference type="SUPFAM" id="SSF54675">
    <property type="entry name" value="Nicotinate/Quinolinate PRTase N-terminal domain-like"/>
    <property type="match status" value="1"/>
</dbReference>
<accession>A5E8V7</accession>
<name>PNCB_BRASB</name>
<protein>
    <recommendedName>
        <fullName evidence="1">Nicotinate phosphoribosyltransferase</fullName>
        <shortName evidence="1">NAPRTase</shortName>
        <ecNumber evidence="1">6.3.4.21</ecNumber>
    </recommendedName>
</protein>
<gene>
    <name evidence="1" type="primary">pncB</name>
    <name type="ordered locus">BBta_0308</name>
</gene>